<comment type="function">
    <text evidence="2">GTP hydrolase that promotes the GTP-dependent binding of aminoacyl-tRNA to the A-site of ribosomes during protein biosynthesis.</text>
</comment>
<comment type="catalytic activity">
    <reaction evidence="2">
        <text>GTP + H2O = GDP + phosphate + H(+)</text>
        <dbReference type="Rhea" id="RHEA:19669"/>
        <dbReference type="ChEBI" id="CHEBI:15377"/>
        <dbReference type="ChEBI" id="CHEBI:15378"/>
        <dbReference type="ChEBI" id="CHEBI:37565"/>
        <dbReference type="ChEBI" id="CHEBI:43474"/>
        <dbReference type="ChEBI" id="CHEBI:58189"/>
        <dbReference type="EC" id="3.6.5.3"/>
    </reaction>
    <physiologicalReaction direction="left-to-right" evidence="2">
        <dbReference type="Rhea" id="RHEA:19670"/>
    </physiologicalReaction>
</comment>
<comment type="subunit">
    <text evidence="2">Monomer.</text>
</comment>
<comment type="subcellular location">
    <subcellularLocation>
        <location evidence="2">Cytoplasm</location>
    </subcellularLocation>
</comment>
<comment type="similarity">
    <text evidence="2">Belongs to the TRAFAC class translation factor GTPase superfamily. Classic translation factor GTPase family. EF-Tu/EF-1A subfamily.</text>
</comment>
<name>EFTU_CLASE</name>
<protein>
    <recommendedName>
        <fullName evidence="2">Elongation factor Tu</fullName>
        <shortName evidence="2">EF-Tu</shortName>
        <ecNumber evidence="2">3.6.5.3</ecNumber>
    </recommendedName>
</protein>
<dbReference type="EC" id="3.6.5.3" evidence="2"/>
<dbReference type="EMBL" id="AM849034">
    <property type="protein sequence ID" value="CAQ00401.1"/>
    <property type="molecule type" value="Genomic_DNA"/>
</dbReference>
<dbReference type="RefSeq" id="WP_012297752.1">
    <property type="nucleotide sequence ID" value="NZ_MZMN01000003.1"/>
</dbReference>
<dbReference type="SMR" id="B0RB36"/>
<dbReference type="STRING" id="31964.CMS0280"/>
<dbReference type="KEGG" id="cms:CMS0280"/>
<dbReference type="eggNOG" id="COG0050">
    <property type="taxonomic scope" value="Bacteria"/>
</dbReference>
<dbReference type="HOGENOM" id="CLU_007265_0_0_11"/>
<dbReference type="OrthoDB" id="9803139at2"/>
<dbReference type="Proteomes" id="UP000001318">
    <property type="component" value="Chromosome"/>
</dbReference>
<dbReference type="GO" id="GO:0005829">
    <property type="term" value="C:cytosol"/>
    <property type="evidence" value="ECO:0007669"/>
    <property type="project" value="TreeGrafter"/>
</dbReference>
<dbReference type="GO" id="GO:0005525">
    <property type="term" value="F:GTP binding"/>
    <property type="evidence" value="ECO:0007669"/>
    <property type="project" value="UniProtKB-UniRule"/>
</dbReference>
<dbReference type="GO" id="GO:0003924">
    <property type="term" value="F:GTPase activity"/>
    <property type="evidence" value="ECO:0007669"/>
    <property type="project" value="InterPro"/>
</dbReference>
<dbReference type="GO" id="GO:0003746">
    <property type="term" value="F:translation elongation factor activity"/>
    <property type="evidence" value="ECO:0007669"/>
    <property type="project" value="UniProtKB-UniRule"/>
</dbReference>
<dbReference type="CDD" id="cd01884">
    <property type="entry name" value="EF_Tu"/>
    <property type="match status" value="1"/>
</dbReference>
<dbReference type="CDD" id="cd03697">
    <property type="entry name" value="EFTU_II"/>
    <property type="match status" value="1"/>
</dbReference>
<dbReference type="CDD" id="cd03707">
    <property type="entry name" value="EFTU_III"/>
    <property type="match status" value="1"/>
</dbReference>
<dbReference type="FunFam" id="2.40.30.10:FF:000001">
    <property type="entry name" value="Elongation factor Tu"/>
    <property type="match status" value="1"/>
</dbReference>
<dbReference type="FunFam" id="3.40.50.300:FF:000003">
    <property type="entry name" value="Elongation factor Tu"/>
    <property type="match status" value="1"/>
</dbReference>
<dbReference type="Gene3D" id="3.40.50.300">
    <property type="entry name" value="P-loop containing nucleotide triphosphate hydrolases"/>
    <property type="match status" value="1"/>
</dbReference>
<dbReference type="Gene3D" id="2.40.30.10">
    <property type="entry name" value="Translation factors"/>
    <property type="match status" value="2"/>
</dbReference>
<dbReference type="HAMAP" id="MF_00118_B">
    <property type="entry name" value="EF_Tu_B"/>
    <property type="match status" value="1"/>
</dbReference>
<dbReference type="InterPro" id="IPR041709">
    <property type="entry name" value="EF-Tu_GTP-bd"/>
</dbReference>
<dbReference type="InterPro" id="IPR050055">
    <property type="entry name" value="EF-Tu_GTPase"/>
</dbReference>
<dbReference type="InterPro" id="IPR004161">
    <property type="entry name" value="EFTu-like_2"/>
</dbReference>
<dbReference type="InterPro" id="IPR033720">
    <property type="entry name" value="EFTU_2"/>
</dbReference>
<dbReference type="InterPro" id="IPR031157">
    <property type="entry name" value="G_TR_CS"/>
</dbReference>
<dbReference type="InterPro" id="IPR027417">
    <property type="entry name" value="P-loop_NTPase"/>
</dbReference>
<dbReference type="InterPro" id="IPR005225">
    <property type="entry name" value="Small_GTP-bd"/>
</dbReference>
<dbReference type="InterPro" id="IPR000795">
    <property type="entry name" value="T_Tr_GTP-bd_dom"/>
</dbReference>
<dbReference type="InterPro" id="IPR009000">
    <property type="entry name" value="Transl_B-barrel_sf"/>
</dbReference>
<dbReference type="InterPro" id="IPR009001">
    <property type="entry name" value="Transl_elong_EF1A/Init_IF2_C"/>
</dbReference>
<dbReference type="InterPro" id="IPR004541">
    <property type="entry name" value="Transl_elong_EFTu/EF1A_bac/org"/>
</dbReference>
<dbReference type="InterPro" id="IPR004160">
    <property type="entry name" value="Transl_elong_EFTu/EF1A_C"/>
</dbReference>
<dbReference type="NCBIfam" id="TIGR00485">
    <property type="entry name" value="EF-Tu"/>
    <property type="match status" value="1"/>
</dbReference>
<dbReference type="NCBIfam" id="NF000766">
    <property type="entry name" value="PRK00049.1"/>
    <property type="match status" value="1"/>
</dbReference>
<dbReference type="NCBIfam" id="NF009372">
    <property type="entry name" value="PRK12735.1"/>
    <property type="match status" value="1"/>
</dbReference>
<dbReference type="NCBIfam" id="NF009373">
    <property type="entry name" value="PRK12736.1"/>
    <property type="match status" value="1"/>
</dbReference>
<dbReference type="NCBIfam" id="TIGR00231">
    <property type="entry name" value="small_GTP"/>
    <property type="match status" value="1"/>
</dbReference>
<dbReference type="PANTHER" id="PTHR43721:SF22">
    <property type="entry name" value="ELONGATION FACTOR TU, MITOCHONDRIAL"/>
    <property type="match status" value="1"/>
</dbReference>
<dbReference type="PANTHER" id="PTHR43721">
    <property type="entry name" value="ELONGATION FACTOR TU-RELATED"/>
    <property type="match status" value="1"/>
</dbReference>
<dbReference type="Pfam" id="PF00009">
    <property type="entry name" value="GTP_EFTU"/>
    <property type="match status" value="1"/>
</dbReference>
<dbReference type="Pfam" id="PF03144">
    <property type="entry name" value="GTP_EFTU_D2"/>
    <property type="match status" value="1"/>
</dbReference>
<dbReference type="Pfam" id="PF03143">
    <property type="entry name" value="GTP_EFTU_D3"/>
    <property type="match status" value="1"/>
</dbReference>
<dbReference type="PRINTS" id="PR00315">
    <property type="entry name" value="ELONGATNFCT"/>
</dbReference>
<dbReference type="SUPFAM" id="SSF50465">
    <property type="entry name" value="EF-Tu/eEF-1alpha/eIF2-gamma C-terminal domain"/>
    <property type="match status" value="1"/>
</dbReference>
<dbReference type="SUPFAM" id="SSF52540">
    <property type="entry name" value="P-loop containing nucleoside triphosphate hydrolases"/>
    <property type="match status" value="1"/>
</dbReference>
<dbReference type="SUPFAM" id="SSF50447">
    <property type="entry name" value="Translation proteins"/>
    <property type="match status" value="1"/>
</dbReference>
<dbReference type="PROSITE" id="PS00301">
    <property type="entry name" value="G_TR_1"/>
    <property type="match status" value="1"/>
</dbReference>
<dbReference type="PROSITE" id="PS51722">
    <property type="entry name" value="G_TR_2"/>
    <property type="match status" value="1"/>
</dbReference>
<evidence type="ECO:0000250" key="1"/>
<evidence type="ECO:0000255" key="2">
    <source>
        <dbReference type="HAMAP-Rule" id="MF_00118"/>
    </source>
</evidence>
<organism>
    <name type="scientific">Clavibacter sepedonicus</name>
    <name type="common">Clavibacter michiganensis subsp. sepedonicus</name>
    <dbReference type="NCBI Taxonomy" id="31964"/>
    <lineage>
        <taxon>Bacteria</taxon>
        <taxon>Bacillati</taxon>
        <taxon>Actinomycetota</taxon>
        <taxon>Actinomycetes</taxon>
        <taxon>Micrococcales</taxon>
        <taxon>Microbacteriaceae</taxon>
        <taxon>Clavibacter</taxon>
    </lineage>
</organism>
<sequence length="397" mass="43428">MGKAKFERTKPHVNIGTIGHVDHGKTTLTAAISKVLADKYPSATNVQRDFASIDSAPEERQRGITINISHVEYETPKRHYAHVDAPGHADYIKNMITGAAQMDGAILVVAATDGPMAQTREHVLLAKQVGVPYLLVALNKSDMVDDEEILELVELEVRELLSSQDFDGDNAPVVQVSGLKALEGDEKWVEQIVKLMEAVDESIPEPVRDKDKPFLMPVEDVFTITGRGTVVTGRAERGTLAINSDVEIVGIRPTVKTTVTGIEMFHKQLDEAWAGENCGLLLRGTKREDVERGQVIVKPGSVTPHTKFEGTAYILSKEEGGRHNPFYGNYRPQFYFRTTDVTGVITLPEGAEMVMPGDTTDMKVELIQPIAMEEGLGFAIREGGRTVGAGTVTKIVK</sequence>
<gene>
    <name evidence="2" type="primary">tuf</name>
    <name type="ordered locus">CMS0280</name>
</gene>
<keyword id="KW-0963">Cytoplasm</keyword>
<keyword id="KW-0251">Elongation factor</keyword>
<keyword id="KW-0342">GTP-binding</keyword>
<keyword id="KW-0378">Hydrolase</keyword>
<keyword id="KW-0460">Magnesium</keyword>
<keyword id="KW-0479">Metal-binding</keyword>
<keyword id="KW-0547">Nucleotide-binding</keyword>
<keyword id="KW-0648">Protein biosynthesis</keyword>
<reference key="1">
    <citation type="journal article" date="2008" name="J. Bacteriol.">
        <title>Genome of the actinomycete plant pathogen Clavibacter michiganensis subsp. sepedonicus suggests recent niche adaptation.</title>
        <authorList>
            <person name="Bentley S.D."/>
            <person name="Corton C."/>
            <person name="Brown S.E."/>
            <person name="Barron A."/>
            <person name="Clark L."/>
            <person name="Doggett J."/>
            <person name="Harris B."/>
            <person name="Ormond D."/>
            <person name="Quail M.A."/>
            <person name="May G."/>
            <person name="Francis D."/>
            <person name="Knudson D."/>
            <person name="Parkhill J."/>
            <person name="Ishimaru C.A."/>
        </authorList>
    </citation>
    <scope>NUCLEOTIDE SEQUENCE [LARGE SCALE GENOMIC DNA]</scope>
    <source>
        <strain>ATCC 33113 / DSM 20744 / JCM 9667 / LMG 2889 / ICMP 2535 / C-1</strain>
    </source>
</reference>
<proteinExistence type="inferred from homology"/>
<accession>B0RB36</accession>
<feature type="chain" id="PRO_1000076094" description="Elongation factor Tu">
    <location>
        <begin position="1"/>
        <end position="397"/>
    </location>
</feature>
<feature type="domain" description="tr-type G">
    <location>
        <begin position="10"/>
        <end position="207"/>
    </location>
</feature>
<feature type="region of interest" description="G1" evidence="1">
    <location>
        <begin position="19"/>
        <end position="26"/>
    </location>
</feature>
<feature type="region of interest" description="G2" evidence="1">
    <location>
        <begin position="63"/>
        <end position="67"/>
    </location>
</feature>
<feature type="region of interest" description="G3" evidence="1">
    <location>
        <begin position="84"/>
        <end position="87"/>
    </location>
</feature>
<feature type="region of interest" description="G4" evidence="1">
    <location>
        <begin position="139"/>
        <end position="142"/>
    </location>
</feature>
<feature type="region of interest" description="G5" evidence="1">
    <location>
        <begin position="177"/>
        <end position="179"/>
    </location>
</feature>
<feature type="binding site" evidence="2">
    <location>
        <begin position="19"/>
        <end position="26"/>
    </location>
    <ligand>
        <name>GTP</name>
        <dbReference type="ChEBI" id="CHEBI:37565"/>
    </ligand>
</feature>
<feature type="binding site" evidence="2">
    <location>
        <position position="26"/>
    </location>
    <ligand>
        <name>Mg(2+)</name>
        <dbReference type="ChEBI" id="CHEBI:18420"/>
    </ligand>
</feature>
<feature type="binding site" evidence="2">
    <location>
        <begin position="84"/>
        <end position="88"/>
    </location>
    <ligand>
        <name>GTP</name>
        <dbReference type="ChEBI" id="CHEBI:37565"/>
    </ligand>
</feature>
<feature type="binding site" evidence="2">
    <location>
        <begin position="139"/>
        <end position="142"/>
    </location>
    <ligand>
        <name>GTP</name>
        <dbReference type="ChEBI" id="CHEBI:37565"/>
    </ligand>
</feature>